<feature type="chain" id="PRO_0000290566" description="Phosphoribosyl isomerase A">
    <location>
        <begin position="1"/>
        <end position="248"/>
    </location>
</feature>
<feature type="active site" description="Proton acceptor" evidence="1">
    <location>
        <position position="14"/>
    </location>
</feature>
<feature type="active site" description="Proton donor" evidence="1">
    <location>
        <position position="133"/>
    </location>
</feature>
<sequence>MSEKRPLILLPAVDVVEGRAVRLVQGKAGSETEYGSALDAALGWQRDGAEWIHLVDLDAAFGRGSNRELLADVVGRLDVAVELSGGIRDDESLEAALATGCARVNIGTAALENPQWCAKVVAEFGDKVAVGLDVKIVDDQHRLRGRGWETDGGDLWEVLDRLDSEGCSRYVVTDVTKDGTLQGPNLDLLGRVADRTDAPVIASGGVSSLDDLRAIATLTDRGVEGAIVGKALYAGRFTLPEALAAMGQ</sequence>
<comment type="function">
    <text evidence="1">Involved in both the histidine and tryptophan biosynthetic pathways.</text>
</comment>
<comment type="catalytic activity">
    <reaction evidence="1">
        <text>1-(5-phospho-beta-D-ribosyl)-5-[(5-phospho-beta-D-ribosylamino)methylideneamino]imidazole-4-carboxamide = 5-[(5-phospho-1-deoxy-D-ribulos-1-ylimino)methylamino]-1-(5-phospho-beta-D-ribosyl)imidazole-4-carboxamide</text>
        <dbReference type="Rhea" id="RHEA:15469"/>
        <dbReference type="ChEBI" id="CHEBI:58435"/>
        <dbReference type="ChEBI" id="CHEBI:58525"/>
        <dbReference type="EC" id="5.3.1.16"/>
    </reaction>
</comment>
<comment type="catalytic activity">
    <reaction evidence="1">
        <text>N-(5-phospho-beta-D-ribosyl)anthranilate = 1-(2-carboxyphenylamino)-1-deoxy-D-ribulose 5-phosphate</text>
        <dbReference type="Rhea" id="RHEA:21540"/>
        <dbReference type="ChEBI" id="CHEBI:18277"/>
        <dbReference type="ChEBI" id="CHEBI:58613"/>
        <dbReference type="EC" id="5.3.1.24"/>
    </reaction>
</comment>
<comment type="pathway">
    <text evidence="1">Amino-acid biosynthesis; L-histidine biosynthesis; L-histidine from 5-phospho-alpha-D-ribose 1-diphosphate: step 4/9.</text>
</comment>
<comment type="pathway">
    <text evidence="1">Amino-acid biosynthesis; L-tryptophan biosynthesis; L-tryptophan from chorismate: step 3/5.</text>
</comment>
<comment type="subcellular location">
    <subcellularLocation>
        <location evidence="1">Cytoplasm</location>
    </subcellularLocation>
</comment>
<comment type="similarity">
    <text evidence="1">Belongs to the HisA/HisF family.</text>
</comment>
<dbReference type="EC" id="5.3.1.16" evidence="1"/>
<dbReference type="EC" id="5.3.1.24" evidence="1"/>
<dbReference type="EMBL" id="CP000580">
    <property type="protein sequence ID" value="ABN98854.1"/>
    <property type="molecule type" value="Genomic_DNA"/>
</dbReference>
<dbReference type="SMR" id="A3Q127"/>
<dbReference type="KEGG" id="mjl:Mjls_3075"/>
<dbReference type="HOGENOM" id="CLU_048577_1_1_11"/>
<dbReference type="BioCyc" id="MSP164757:G1G8C-3100-MONOMER"/>
<dbReference type="UniPathway" id="UPA00031">
    <property type="reaction ID" value="UER00009"/>
</dbReference>
<dbReference type="UniPathway" id="UPA00035">
    <property type="reaction ID" value="UER00042"/>
</dbReference>
<dbReference type="GO" id="GO:0005737">
    <property type="term" value="C:cytoplasm"/>
    <property type="evidence" value="ECO:0007669"/>
    <property type="project" value="UniProtKB-SubCell"/>
</dbReference>
<dbReference type="GO" id="GO:0003949">
    <property type="term" value="F:1-(5-phosphoribosyl)-5-[(5-phosphoribosylamino)methylideneamino]imidazole-4-carboxamide isomerase activity"/>
    <property type="evidence" value="ECO:0007669"/>
    <property type="project" value="UniProtKB-UniRule"/>
</dbReference>
<dbReference type="GO" id="GO:0004640">
    <property type="term" value="F:phosphoribosylanthranilate isomerase activity"/>
    <property type="evidence" value="ECO:0007669"/>
    <property type="project" value="UniProtKB-UniRule"/>
</dbReference>
<dbReference type="GO" id="GO:0000105">
    <property type="term" value="P:L-histidine biosynthetic process"/>
    <property type="evidence" value="ECO:0007669"/>
    <property type="project" value="UniProtKB-UniRule"/>
</dbReference>
<dbReference type="GO" id="GO:0000162">
    <property type="term" value="P:L-tryptophan biosynthetic process"/>
    <property type="evidence" value="ECO:0007669"/>
    <property type="project" value="UniProtKB-UniRule"/>
</dbReference>
<dbReference type="CDD" id="cd04732">
    <property type="entry name" value="HisA"/>
    <property type="match status" value="1"/>
</dbReference>
<dbReference type="FunFam" id="3.20.20.70:FF:000009">
    <property type="entry name" value="1-(5-phosphoribosyl)-5-[(5-phosphoribosylamino)methylideneamino] imidazole-4-carboxamide isomerase"/>
    <property type="match status" value="1"/>
</dbReference>
<dbReference type="Gene3D" id="3.20.20.70">
    <property type="entry name" value="Aldolase class I"/>
    <property type="match status" value="1"/>
</dbReference>
<dbReference type="HAMAP" id="MF_01014">
    <property type="entry name" value="HisA"/>
    <property type="match status" value="1"/>
</dbReference>
<dbReference type="InterPro" id="IPR013785">
    <property type="entry name" value="Aldolase_TIM"/>
</dbReference>
<dbReference type="InterPro" id="IPR006062">
    <property type="entry name" value="His_biosynth"/>
</dbReference>
<dbReference type="InterPro" id="IPR010188">
    <property type="entry name" value="HisA/PriA_Actinobacteria"/>
</dbReference>
<dbReference type="InterPro" id="IPR044524">
    <property type="entry name" value="Isoase_HisA-like"/>
</dbReference>
<dbReference type="InterPro" id="IPR023016">
    <property type="entry name" value="Isoase_HisA-like_bact"/>
</dbReference>
<dbReference type="InterPro" id="IPR011060">
    <property type="entry name" value="RibuloseP-bd_barrel"/>
</dbReference>
<dbReference type="NCBIfam" id="TIGR01919">
    <property type="entry name" value="hisA-trpF"/>
    <property type="match status" value="1"/>
</dbReference>
<dbReference type="PANTHER" id="PTHR43090">
    <property type="entry name" value="1-(5-PHOSPHORIBOSYL)-5-[(5-PHOSPHORIBOSYLAMINO)METHYLIDENEAMINO] IMIDAZOLE-4-CARBOXAMIDE ISOMERASE"/>
    <property type="match status" value="1"/>
</dbReference>
<dbReference type="PANTHER" id="PTHR43090:SF2">
    <property type="entry name" value="1-(5-PHOSPHORIBOSYL)-5-[(5-PHOSPHORIBOSYLAMINO)METHYLIDENEAMINO] IMIDAZOLE-4-CARBOXAMIDE ISOMERASE"/>
    <property type="match status" value="1"/>
</dbReference>
<dbReference type="Pfam" id="PF00977">
    <property type="entry name" value="His_biosynth"/>
    <property type="match status" value="1"/>
</dbReference>
<dbReference type="SUPFAM" id="SSF51366">
    <property type="entry name" value="Ribulose-phoshate binding barrel"/>
    <property type="match status" value="1"/>
</dbReference>
<proteinExistence type="inferred from homology"/>
<evidence type="ECO:0000255" key="1">
    <source>
        <dbReference type="HAMAP-Rule" id="MF_01014"/>
    </source>
</evidence>
<keyword id="KW-0028">Amino-acid biosynthesis</keyword>
<keyword id="KW-0057">Aromatic amino acid biosynthesis</keyword>
<keyword id="KW-0963">Cytoplasm</keyword>
<keyword id="KW-0368">Histidine biosynthesis</keyword>
<keyword id="KW-0413">Isomerase</keyword>
<keyword id="KW-0822">Tryptophan biosynthesis</keyword>
<accession>A3Q127</accession>
<reference key="1">
    <citation type="submission" date="2007-02" db="EMBL/GenBank/DDBJ databases">
        <title>Complete sequence of Mycobacterium sp. JLS.</title>
        <authorList>
            <consortium name="US DOE Joint Genome Institute"/>
            <person name="Copeland A."/>
            <person name="Lucas S."/>
            <person name="Lapidus A."/>
            <person name="Barry K."/>
            <person name="Detter J.C."/>
            <person name="Glavina del Rio T."/>
            <person name="Hammon N."/>
            <person name="Israni S."/>
            <person name="Dalin E."/>
            <person name="Tice H."/>
            <person name="Pitluck S."/>
            <person name="Chain P."/>
            <person name="Malfatti S."/>
            <person name="Shin M."/>
            <person name="Vergez L."/>
            <person name="Schmutz J."/>
            <person name="Larimer F."/>
            <person name="Land M."/>
            <person name="Hauser L."/>
            <person name="Kyrpides N."/>
            <person name="Mikhailova N."/>
            <person name="Miller C.D."/>
            <person name="Anderson A.J."/>
            <person name="Sims R.C."/>
            <person name="Richardson P."/>
        </authorList>
    </citation>
    <scope>NUCLEOTIDE SEQUENCE [LARGE SCALE GENOMIC DNA]</scope>
    <source>
        <strain>JLS</strain>
    </source>
</reference>
<protein>
    <recommendedName>
        <fullName evidence="1">Phosphoribosyl isomerase A</fullName>
    </recommendedName>
    <alternativeName>
        <fullName evidence="1">1-(5-phosphoribosyl)-5-[(5-phosphoribosylamino)methylideneamino] imidazole-4-carboxamide isomerase</fullName>
        <ecNumber evidence="1">5.3.1.16</ecNumber>
    </alternativeName>
    <alternativeName>
        <fullName evidence="1">N-(5'-phosphoribosyl)anthranilate isomerase</fullName>
        <shortName evidence="1">PRAI</shortName>
        <ecNumber evidence="1">5.3.1.24</ecNumber>
    </alternativeName>
    <alternativeName>
        <fullName evidence="1">Phosphoribosylformimino-5-aminoimidazole carboxamide ribotide isomerase</fullName>
    </alternativeName>
</protein>
<organism>
    <name type="scientific">Mycobacterium sp. (strain JLS)</name>
    <dbReference type="NCBI Taxonomy" id="164757"/>
    <lineage>
        <taxon>Bacteria</taxon>
        <taxon>Bacillati</taxon>
        <taxon>Actinomycetota</taxon>
        <taxon>Actinomycetes</taxon>
        <taxon>Mycobacteriales</taxon>
        <taxon>Mycobacteriaceae</taxon>
        <taxon>Mycobacterium</taxon>
    </lineage>
</organism>
<name>HIS4_MYCSJ</name>
<gene>
    <name evidence="1" type="primary">priA</name>
    <name evidence="1" type="synonym">hisA</name>
    <name type="ordered locus">Mjls_3075</name>
</gene>